<gene>
    <name evidence="2" type="primary">ddl</name>
    <name type="ordered locus">Shewmr7_2205</name>
</gene>
<feature type="chain" id="PRO_1000074795" description="D-alanine--D-alanine ligase">
    <location>
        <begin position="1"/>
        <end position="336"/>
    </location>
</feature>
<feature type="domain" description="ATP-grasp" evidence="2">
    <location>
        <begin position="124"/>
        <end position="330"/>
    </location>
</feature>
<feature type="binding site" evidence="2">
    <location>
        <begin position="154"/>
        <end position="209"/>
    </location>
    <ligand>
        <name>ATP</name>
        <dbReference type="ChEBI" id="CHEBI:30616"/>
    </ligand>
</feature>
<feature type="binding site" evidence="2">
    <location>
        <position position="284"/>
    </location>
    <ligand>
        <name>Mg(2+)</name>
        <dbReference type="ChEBI" id="CHEBI:18420"/>
        <label>1</label>
    </ligand>
</feature>
<feature type="binding site" evidence="2">
    <location>
        <position position="297"/>
    </location>
    <ligand>
        <name>Mg(2+)</name>
        <dbReference type="ChEBI" id="CHEBI:18420"/>
        <label>1</label>
    </ligand>
</feature>
<feature type="binding site" evidence="2">
    <location>
        <position position="297"/>
    </location>
    <ligand>
        <name>Mg(2+)</name>
        <dbReference type="ChEBI" id="CHEBI:18420"/>
        <label>2</label>
    </ligand>
</feature>
<feature type="binding site" evidence="2">
    <location>
        <position position="299"/>
    </location>
    <ligand>
        <name>Mg(2+)</name>
        <dbReference type="ChEBI" id="CHEBI:18420"/>
        <label>2</label>
    </ligand>
</feature>
<name>DDL_SHESR</name>
<protein>
    <recommendedName>
        <fullName evidence="2">D-alanine--D-alanine ligase</fullName>
        <ecNumber evidence="2">6.3.2.4</ecNumber>
    </recommendedName>
    <alternativeName>
        <fullName evidence="2">D-Ala-D-Ala ligase</fullName>
    </alternativeName>
    <alternativeName>
        <fullName evidence="2">D-alanylalanine synthetase</fullName>
    </alternativeName>
</protein>
<proteinExistence type="inferred from homology"/>
<organism>
    <name type="scientific">Shewanella sp. (strain MR-7)</name>
    <dbReference type="NCBI Taxonomy" id="60481"/>
    <lineage>
        <taxon>Bacteria</taxon>
        <taxon>Pseudomonadati</taxon>
        <taxon>Pseudomonadota</taxon>
        <taxon>Gammaproteobacteria</taxon>
        <taxon>Alteromonadales</taxon>
        <taxon>Shewanellaceae</taxon>
        <taxon>Shewanella</taxon>
    </lineage>
</organism>
<accession>Q0HUL2</accession>
<evidence type="ECO:0000250" key="1"/>
<evidence type="ECO:0000255" key="2">
    <source>
        <dbReference type="HAMAP-Rule" id="MF_00047"/>
    </source>
</evidence>
<keyword id="KW-0067">ATP-binding</keyword>
<keyword id="KW-0133">Cell shape</keyword>
<keyword id="KW-0961">Cell wall biogenesis/degradation</keyword>
<keyword id="KW-0963">Cytoplasm</keyword>
<keyword id="KW-0436">Ligase</keyword>
<keyword id="KW-0460">Magnesium</keyword>
<keyword id="KW-0464">Manganese</keyword>
<keyword id="KW-0479">Metal-binding</keyword>
<keyword id="KW-0547">Nucleotide-binding</keyword>
<keyword id="KW-0573">Peptidoglycan synthesis</keyword>
<comment type="function">
    <text evidence="2">Cell wall formation.</text>
</comment>
<comment type="catalytic activity">
    <reaction evidence="2">
        <text>2 D-alanine + ATP = D-alanyl-D-alanine + ADP + phosphate + H(+)</text>
        <dbReference type="Rhea" id="RHEA:11224"/>
        <dbReference type="ChEBI" id="CHEBI:15378"/>
        <dbReference type="ChEBI" id="CHEBI:30616"/>
        <dbReference type="ChEBI" id="CHEBI:43474"/>
        <dbReference type="ChEBI" id="CHEBI:57416"/>
        <dbReference type="ChEBI" id="CHEBI:57822"/>
        <dbReference type="ChEBI" id="CHEBI:456216"/>
        <dbReference type="EC" id="6.3.2.4"/>
    </reaction>
</comment>
<comment type="cofactor">
    <cofactor evidence="1">
        <name>Mg(2+)</name>
        <dbReference type="ChEBI" id="CHEBI:18420"/>
    </cofactor>
    <cofactor evidence="1">
        <name>Mn(2+)</name>
        <dbReference type="ChEBI" id="CHEBI:29035"/>
    </cofactor>
    <text evidence="1">Binds 2 magnesium or manganese ions per subunit.</text>
</comment>
<comment type="pathway">
    <text evidence="2">Cell wall biogenesis; peptidoglycan biosynthesis.</text>
</comment>
<comment type="subcellular location">
    <subcellularLocation>
        <location evidence="2">Cytoplasm</location>
    </subcellularLocation>
</comment>
<comment type="similarity">
    <text evidence="2">Belongs to the D-alanine--D-alanine ligase family.</text>
</comment>
<sequence length="336" mass="37377">MSKINLLLLCGGGSAEHDISLLSANYFETSLAKSEQVNVLRVVLDKFGQYQTAAGDDCELTNNREIRFRDETKAPWPVDYVIPCIHGYPGETGDIQSYFNLIQLPYFGCESEASSNCFNKITAKMWFSALGIPNTPYIFLNQYDDEAIAQTQAALENWGSIFVKAASQGSSVGCYKVDDSSKVAGVLKDAFGYAPYVIVEKTIKARELEVAVYEYQGEVVATLPGEIICDSNTFYTFDEKYAKSSKARTDVVAQNVPADISDQIRAYAIKAFKGMKLRHLSRIDFFLTQDNEILLNEINTFPGSTPISMFPKMLQNHGHDFTEYLSLVIKGQLAAK</sequence>
<reference key="1">
    <citation type="submission" date="2006-08" db="EMBL/GenBank/DDBJ databases">
        <title>Complete sequence of chromosome 1 of Shewanella sp. MR-7.</title>
        <authorList>
            <person name="Copeland A."/>
            <person name="Lucas S."/>
            <person name="Lapidus A."/>
            <person name="Barry K."/>
            <person name="Detter J.C."/>
            <person name="Glavina del Rio T."/>
            <person name="Hammon N."/>
            <person name="Israni S."/>
            <person name="Dalin E."/>
            <person name="Tice H."/>
            <person name="Pitluck S."/>
            <person name="Kiss H."/>
            <person name="Brettin T."/>
            <person name="Bruce D."/>
            <person name="Han C."/>
            <person name="Tapia R."/>
            <person name="Gilna P."/>
            <person name="Schmutz J."/>
            <person name="Larimer F."/>
            <person name="Land M."/>
            <person name="Hauser L."/>
            <person name="Kyrpides N."/>
            <person name="Mikhailova N."/>
            <person name="Nealson K."/>
            <person name="Konstantinidis K."/>
            <person name="Klappenbach J."/>
            <person name="Tiedje J."/>
            <person name="Richardson P."/>
        </authorList>
    </citation>
    <scope>NUCLEOTIDE SEQUENCE [LARGE SCALE GENOMIC DNA]</scope>
    <source>
        <strain>MR-7</strain>
    </source>
</reference>
<dbReference type="EC" id="6.3.2.4" evidence="2"/>
<dbReference type="EMBL" id="CP000444">
    <property type="protein sequence ID" value="ABI43193.1"/>
    <property type="molecule type" value="Genomic_DNA"/>
</dbReference>
<dbReference type="SMR" id="Q0HUL2"/>
<dbReference type="KEGG" id="shm:Shewmr7_2205"/>
<dbReference type="HOGENOM" id="CLU_039268_0_0_6"/>
<dbReference type="UniPathway" id="UPA00219"/>
<dbReference type="GO" id="GO:0005829">
    <property type="term" value="C:cytosol"/>
    <property type="evidence" value="ECO:0007669"/>
    <property type="project" value="TreeGrafter"/>
</dbReference>
<dbReference type="GO" id="GO:0005524">
    <property type="term" value="F:ATP binding"/>
    <property type="evidence" value="ECO:0007669"/>
    <property type="project" value="UniProtKB-KW"/>
</dbReference>
<dbReference type="GO" id="GO:0008716">
    <property type="term" value="F:D-alanine-D-alanine ligase activity"/>
    <property type="evidence" value="ECO:0007669"/>
    <property type="project" value="UniProtKB-UniRule"/>
</dbReference>
<dbReference type="GO" id="GO:0046872">
    <property type="term" value="F:metal ion binding"/>
    <property type="evidence" value="ECO:0007669"/>
    <property type="project" value="UniProtKB-KW"/>
</dbReference>
<dbReference type="GO" id="GO:0071555">
    <property type="term" value="P:cell wall organization"/>
    <property type="evidence" value="ECO:0007669"/>
    <property type="project" value="UniProtKB-KW"/>
</dbReference>
<dbReference type="GO" id="GO:0009252">
    <property type="term" value="P:peptidoglycan biosynthetic process"/>
    <property type="evidence" value="ECO:0007669"/>
    <property type="project" value="UniProtKB-UniRule"/>
</dbReference>
<dbReference type="GO" id="GO:0008360">
    <property type="term" value="P:regulation of cell shape"/>
    <property type="evidence" value="ECO:0007669"/>
    <property type="project" value="UniProtKB-KW"/>
</dbReference>
<dbReference type="FunFam" id="3.40.50.20:FF:000034">
    <property type="entry name" value="D-alanine--D-alanine ligase"/>
    <property type="match status" value="1"/>
</dbReference>
<dbReference type="Gene3D" id="3.40.50.20">
    <property type="match status" value="1"/>
</dbReference>
<dbReference type="Gene3D" id="3.30.1490.20">
    <property type="entry name" value="ATP-grasp fold, A domain"/>
    <property type="match status" value="1"/>
</dbReference>
<dbReference type="Gene3D" id="3.30.470.20">
    <property type="entry name" value="ATP-grasp fold, B domain"/>
    <property type="match status" value="1"/>
</dbReference>
<dbReference type="HAMAP" id="MF_00047">
    <property type="entry name" value="Dala_Dala_lig"/>
    <property type="match status" value="1"/>
</dbReference>
<dbReference type="InterPro" id="IPR011761">
    <property type="entry name" value="ATP-grasp"/>
</dbReference>
<dbReference type="InterPro" id="IPR013815">
    <property type="entry name" value="ATP_grasp_subdomain_1"/>
</dbReference>
<dbReference type="InterPro" id="IPR000291">
    <property type="entry name" value="D-Ala_lig_Van_CS"/>
</dbReference>
<dbReference type="InterPro" id="IPR005905">
    <property type="entry name" value="D_ala_D_ala"/>
</dbReference>
<dbReference type="InterPro" id="IPR011095">
    <property type="entry name" value="Dala_Dala_lig_C"/>
</dbReference>
<dbReference type="InterPro" id="IPR011127">
    <property type="entry name" value="Dala_Dala_lig_N"/>
</dbReference>
<dbReference type="InterPro" id="IPR016185">
    <property type="entry name" value="PreATP-grasp_dom_sf"/>
</dbReference>
<dbReference type="NCBIfam" id="TIGR01205">
    <property type="entry name" value="D_ala_D_alaTIGR"/>
    <property type="match status" value="1"/>
</dbReference>
<dbReference type="NCBIfam" id="NF002527">
    <property type="entry name" value="PRK01966.1-3"/>
    <property type="match status" value="1"/>
</dbReference>
<dbReference type="NCBIfam" id="NF002528">
    <property type="entry name" value="PRK01966.1-4"/>
    <property type="match status" value="1"/>
</dbReference>
<dbReference type="PANTHER" id="PTHR23132">
    <property type="entry name" value="D-ALANINE--D-ALANINE LIGASE"/>
    <property type="match status" value="1"/>
</dbReference>
<dbReference type="PANTHER" id="PTHR23132:SF25">
    <property type="entry name" value="D-ALANINE--D-ALANINE LIGASE A"/>
    <property type="match status" value="1"/>
</dbReference>
<dbReference type="Pfam" id="PF07478">
    <property type="entry name" value="Dala_Dala_lig_C"/>
    <property type="match status" value="1"/>
</dbReference>
<dbReference type="Pfam" id="PF01820">
    <property type="entry name" value="Dala_Dala_lig_N"/>
    <property type="match status" value="1"/>
</dbReference>
<dbReference type="PIRSF" id="PIRSF039102">
    <property type="entry name" value="Ddl/VanB"/>
    <property type="match status" value="1"/>
</dbReference>
<dbReference type="SUPFAM" id="SSF56059">
    <property type="entry name" value="Glutathione synthetase ATP-binding domain-like"/>
    <property type="match status" value="1"/>
</dbReference>
<dbReference type="SUPFAM" id="SSF52440">
    <property type="entry name" value="PreATP-grasp domain"/>
    <property type="match status" value="1"/>
</dbReference>
<dbReference type="PROSITE" id="PS50975">
    <property type="entry name" value="ATP_GRASP"/>
    <property type="match status" value="1"/>
</dbReference>
<dbReference type="PROSITE" id="PS00843">
    <property type="entry name" value="DALA_DALA_LIGASE_1"/>
    <property type="match status" value="1"/>
</dbReference>
<dbReference type="PROSITE" id="PS00844">
    <property type="entry name" value="DALA_DALA_LIGASE_2"/>
    <property type="match status" value="1"/>
</dbReference>